<reference key="1">
    <citation type="journal article" date="2004" name="Proc. Natl. Acad. Sci. U.S.A.">
        <title>Genome sequence of the enterobacterial phytopathogen Erwinia carotovora subsp. atroseptica and characterization of virulence factors.</title>
        <authorList>
            <person name="Bell K.S."/>
            <person name="Sebaihia M."/>
            <person name="Pritchard L."/>
            <person name="Holden M.T.G."/>
            <person name="Hyman L.J."/>
            <person name="Holeva M.C."/>
            <person name="Thomson N.R."/>
            <person name="Bentley S.D."/>
            <person name="Churcher L.J.C."/>
            <person name="Mungall K."/>
            <person name="Atkin R."/>
            <person name="Bason N."/>
            <person name="Brooks K."/>
            <person name="Chillingworth T."/>
            <person name="Clark K."/>
            <person name="Doggett J."/>
            <person name="Fraser A."/>
            <person name="Hance Z."/>
            <person name="Hauser H."/>
            <person name="Jagels K."/>
            <person name="Moule S."/>
            <person name="Norbertczak H."/>
            <person name="Ormond D."/>
            <person name="Price C."/>
            <person name="Quail M.A."/>
            <person name="Sanders M."/>
            <person name="Walker D."/>
            <person name="Whitehead S."/>
            <person name="Salmond G.P.C."/>
            <person name="Birch P.R.J."/>
            <person name="Parkhill J."/>
            <person name="Toth I.K."/>
        </authorList>
    </citation>
    <scope>NUCLEOTIDE SEQUENCE [LARGE SCALE GENOMIC DNA]</scope>
    <source>
        <strain>SCRI 1043 / ATCC BAA-672</strain>
    </source>
</reference>
<feature type="chain" id="PRO_1000061868" description="UPF0250 protein ECA1299">
    <location>
        <begin position="1"/>
        <end position="87"/>
    </location>
</feature>
<dbReference type="EMBL" id="BX950851">
    <property type="protein sequence ID" value="CAG74209.1"/>
    <property type="molecule type" value="Genomic_DNA"/>
</dbReference>
<dbReference type="RefSeq" id="WP_011092886.1">
    <property type="nucleotide sequence ID" value="NC_004547.2"/>
</dbReference>
<dbReference type="SMR" id="Q6D7M6"/>
<dbReference type="STRING" id="218491.ECA1299"/>
<dbReference type="KEGG" id="eca:ECA1299"/>
<dbReference type="PATRIC" id="fig|218491.5.peg.1323"/>
<dbReference type="eggNOG" id="COG2921">
    <property type="taxonomic scope" value="Bacteria"/>
</dbReference>
<dbReference type="HOGENOM" id="CLU_161438_2_1_6"/>
<dbReference type="OrthoDB" id="9793424at2"/>
<dbReference type="Proteomes" id="UP000007966">
    <property type="component" value="Chromosome"/>
</dbReference>
<dbReference type="GO" id="GO:0005829">
    <property type="term" value="C:cytosol"/>
    <property type="evidence" value="ECO:0007669"/>
    <property type="project" value="TreeGrafter"/>
</dbReference>
<dbReference type="FunFam" id="3.30.70.260:FF:000002">
    <property type="entry name" value="UPF0250 protein YbeD"/>
    <property type="match status" value="1"/>
</dbReference>
<dbReference type="Gene3D" id="3.30.70.260">
    <property type="match status" value="1"/>
</dbReference>
<dbReference type="HAMAP" id="MF_00659">
    <property type="entry name" value="UPF0250"/>
    <property type="match status" value="1"/>
</dbReference>
<dbReference type="InterPro" id="IPR007454">
    <property type="entry name" value="UPF0250_YbeD-like"/>
</dbReference>
<dbReference type="InterPro" id="IPR027471">
    <property type="entry name" value="YbeD-like_sf"/>
</dbReference>
<dbReference type="NCBIfam" id="NF003447">
    <property type="entry name" value="PRK04998.1"/>
    <property type="match status" value="1"/>
</dbReference>
<dbReference type="PANTHER" id="PTHR38036">
    <property type="entry name" value="UPF0250 PROTEIN YBED"/>
    <property type="match status" value="1"/>
</dbReference>
<dbReference type="PANTHER" id="PTHR38036:SF1">
    <property type="entry name" value="UPF0250 PROTEIN YBED"/>
    <property type="match status" value="1"/>
</dbReference>
<dbReference type="Pfam" id="PF04359">
    <property type="entry name" value="DUF493"/>
    <property type="match status" value="1"/>
</dbReference>
<dbReference type="SUPFAM" id="SSF117991">
    <property type="entry name" value="YbeD/HP0495-like"/>
    <property type="match status" value="1"/>
</dbReference>
<comment type="similarity">
    <text evidence="1">Belongs to the UPF0250 family.</text>
</comment>
<gene>
    <name type="ordered locus">ECA1299</name>
</gene>
<keyword id="KW-1185">Reference proteome</keyword>
<organism>
    <name type="scientific">Pectobacterium atrosepticum (strain SCRI 1043 / ATCC BAA-672)</name>
    <name type="common">Erwinia carotovora subsp. atroseptica</name>
    <dbReference type="NCBI Taxonomy" id="218491"/>
    <lineage>
        <taxon>Bacteria</taxon>
        <taxon>Pseudomonadati</taxon>
        <taxon>Pseudomonadota</taxon>
        <taxon>Gammaproteobacteria</taxon>
        <taxon>Enterobacterales</taxon>
        <taxon>Pectobacteriaceae</taxon>
        <taxon>Pectobacterium</taxon>
    </lineage>
</organism>
<name>Y1299_PECAS</name>
<sequence>MKTKLNELIEFPCVFTYKVMGEAKPELVDLVVEVVQRHAPGDYTPQIKPSSKGNYHSVSITITATHIEQVETLYEELGNIDIVRMVL</sequence>
<evidence type="ECO:0000255" key="1">
    <source>
        <dbReference type="HAMAP-Rule" id="MF_00659"/>
    </source>
</evidence>
<protein>
    <recommendedName>
        <fullName evidence="1">UPF0250 protein ECA1299</fullName>
    </recommendedName>
</protein>
<proteinExistence type="inferred from homology"/>
<accession>Q6D7M6</accession>